<accession>Q6WRX9</accession>
<organism>
    <name type="scientific">Schizosaccharomyces kambucha</name>
    <name type="common">Fission yeast</name>
    <dbReference type="NCBI Taxonomy" id="204045"/>
    <lineage>
        <taxon>Eukaryota</taxon>
        <taxon>Fungi</taxon>
        <taxon>Dikarya</taxon>
        <taxon>Ascomycota</taxon>
        <taxon>Taphrinomycotina</taxon>
        <taxon>Schizosaccharomycetes</taxon>
        <taxon>Schizosaccharomycetales</taxon>
        <taxon>Schizosaccharomycetaceae</taxon>
        <taxon>Schizosaccharomyces</taxon>
    </lineage>
</organism>
<evidence type="ECO:0000250" key="1"/>
<evidence type="ECO:0000305" key="2"/>
<protein>
    <recommendedName>
        <fullName>Mating-type P-specific polypeptide Pc</fullName>
    </recommendedName>
</protein>
<dbReference type="EMBL" id="AY271822">
    <property type="protein sequence ID" value="AAQ82719.1"/>
    <property type="molecule type" value="Genomic_DNA"/>
</dbReference>
<dbReference type="SMR" id="Q6WRX9"/>
<dbReference type="GO" id="GO:0005634">
    <property type="term" value="C:nucleus"/>
    <property type="evidence" value="ECO:0007669"/>
    <property type="project" value="UniProtKB-SubCell"/>
</dbReference>
<dbReference type="GO" id="GO:0003677">
    <property type="term" value="F:DNA binding"/>
    <property type="evidence" value="ECO:0007669"/>
    <property type="project" value="UniProtKB-KW"/>
</dbReference>
<dbReference type="InterPro" id="IPR009071">
    <property type="entry name" value="HMG_box_dom"/>
</dbReference>
<dbReference type="InterPro" id="IPR036910">
    <property type="entry name" value="HMG_box_dom_sf"/>
</dbReference>
<dbReference type="SMART" id="SM00398">
    <property type="entry name" value="HMG"/>
    <property type="match status" value="1"/>
</dbReference>
<dbReference type="SUPFAM" id="SSF47095">
    <property type="entry name" value="HMG-box"/>
    <property type="match status" value="1"/>
</dbReference>
<feature type="chain" id="PRO_0000048586" description="Mating-type P-specific polypeptide Pc">
    <location>
        <begin position="1"/>
        <end position="118"/>
    </location>
</feature>
<feature type="DNA-binding region" description="HMG box">
    <location>
        <begin position="29"/>
        <end position="97"/>
    </location>
</feature>
<sequence length="118" mass="13804">MDPRLRAPIFLPILTPETLQKKKQIKGNKTTIYKNGFMLFRSRLHKILNLSGDWAGASAKCSIIWHTLPQNVRLAWSQLAELSHYQDVRKQIAKLERILYSKRLNGHNNYKLHISRVQ</sequence>
<gene>
    <name type="primary">matPc</name>
</gene>
<proteinExistence type="inferred from homology"/>
<keyword id="KW-0238">DNA-binding</keyword>
<keyword id="KW-0539">Nucleus</keyword>
<keyword id="KW-0804">Transcription</keyword>
<keyword id="KW-0805">Transcription regulation</keyword>
<comment type="function">
    <text evidence="1">Mating type proteins are sequence specific DNA-binding proteins that act as master switches in yeast differentiation by controlling gene expression in a cell type-specific fashion. Required for conjugation and efficient meiosis (By similarity).</text>
</comment>
<comment type="subcellular location">
    <subcellularLocation>
        <location evidence="2">Nucleus</location>
    </subcellularLocation>
</comment>
<comment type="miscellaneous">
    <text evidence="1">There are three genetic loci for mating type genes in fission yeast, mat1, mat2-P and mat3-M. Cell type is determined by the alternate allele present in mat1, either P (plus) in a h+ or M (minus) in a h- cell. Mat2-P and mat3-M serve as donor of information that is transposed to mat1 during a switch of mating type (By similarity).</text>
</comment>
<name>MATPC_SCHKA</name>
<reference key="1">
    <citation type="journal article" date="2003" name="Yeast">
        <title>DNA sequence of the mat2,3 region of Schizosaccharomyces kambucha shares high homology with the corresponding sequence from Sz. pombe.</title>
        <authorList>
            <person name="Singh G."/>
            <person name="Klar A.J.S."/>
        </authorList>
    </citation>
    <scope>NUCLEOTIDE SEQUENCE [GENOMIC DNA]</scope>
</reference>